<name>RK22_OENAR</name>
<proteinExistence type="inferred from homology"/>
<evidence type="ECO:0000250" key="1"/>
<evidence type="ECO:0000305" key="2"/>
<gene>
    <name type="primary">rpl22</name>
</gene>
<feature type="chain" id="PRO_0000354586" description="Large ribosomal subunit protein uL22c">
    <location>
        <begin position="1"/>
        <end position="137"/>
    </location>
</feature>
<reference key="1">
    <citation type="journal article" date="2008" name="Nucleic Acids Res.">
        <title>The complete nucleotide sequences of the five genetically distinct plastid genomes of Oenothera, subsection Oenothera: I. Sequence evaluation and plastome evolution.</title>
        <authorList>
            <person name="Greiner S."/>
            <person name="Wang X."/>
            <person name="Rauwolf U."/>
            <person name="Silber M.V."/>
            <person name="Mayer K."/>
            <person name="Meurer J."/>
            <person name="Haberer G."/>
            <person name="Herrmann R.G."/>
        </authorList>
    </citation>
    <scope>NUCLEOTIDE SEQUENCE [LARGE SCALE GENOMIC DNA]</scope>
    <source>
        <strain>cv. Douthat 1</strain>
    </source>
</reference>
<protein>
    <recommendedName>
        <fullName evidence="2">Large ribosomal subunit protein uL22c</fullName>
    </recommendedName>
    <alternativeName>
        <fullName>50S ribosomal protein L22, chloroplastic</fullName>
    </alternativeName>
</protein>
<sequence length="137" mass="15788">MKKKKTYGEVYALGQYISMSAPKARRVIDQIRGRSYEETLMLLALMPYRACDPILKLVNSAAANARHNMSFNEATLVISKAEVNEGTTVKKLKPRARGRSYPIRRPTCHIRIVLQDTSFDEFEEDFFSLKKDAWEKK</sequence>
<geneLocation type="chloroplast"/>
<organism>
    <name type="scientific">Oenothera argillicola</name>
    <name type="common">Appalachian evening primrose</name>
    <dbReference type="NCBI Taxonomy" id="3940"/>
    <lineage>
        <taxon>Eukaryota</taxon>
        <taxon>Viridiplantae</taxon>
        <taxon>Streptophyta</taxon>
        <taxon>Embryophyta</taxon>
        <taxon>Tracheophyta</taxon>
        <taxon>Spermatophyta</taxon>
        <taxon>Magnoliopsida</taxon>
        <taxon>eudicotyledons</taxon>
        <taxon>Gunneridae</taxon>
        <taxon>Pentapetalae</taxon>
        <taxon>rosids</taxon>
        <taxon>malvids</taxon>
        <taxon>Myrtales</taxon>
        <taxon>Onagraceae</taxon>
        <taxon>Onagroideae</taxon>
        <taxon>Onagreae</taxon>
        <taxon>Oenothera</taxon>
    </lineage>
</organism>
<comment type="function">
    <text evidence="1">This protein binds specifically to 23S rRNA.</text>
</comment>
<comment type="function">
    <text evidence="1">The globular domain of the protein is located near the polypeptide exit tunnel on the outside of the subunit, while an extended beta-hairpin is found that lines the wall of the exit tunnel in the center of the 70S ribosome.</text>
</comment>
<comment type="subunit">
    <text evidence="1">Part of the 50S ribosomal subunit.</text>
</comment>
<comment type="subcellular location">
    <subcellularLocation>
        <location>Plastid</location>
        <location>Chloroplast</location>
    </subcellularLocation>
</comment>
<comment type="similarity">
    <text evidence="2">Belongs to the universal ribosomal protein uL22 family.</text>
</comment>
<keyword id="KW-0150">Chloroplast</keyword>
<keyword id="KW-0934">Plastid</keyword>
<keyword id="KW-0687">Ribonucleoprotein</keyword>
<keyword id="KW-0689">Ribosomal protein</keyword>
<keyword id="KW-0694">RNA-binding</keyword>
<keyword id="KW-0699">rRNA-binding</keyword>
<accession>B0Z4R5</accession>
<dbReference type="EMBL" id="EU262887">
    <property type="protein sequence ID" value="ABW98743.1"/>
    <property type="molecule type" value="Genomic_DNA"/>
</dbReference>
<dbReference type="RefSeq" id="YP_001687176.1">
    <property type="nucleotide sequence ID" value="NC_010358.2"/>
</dbReference>
<dbReference type="SMR" id="B0Z4R5"/>
<dbReference type="GeneID" id="5951823"/>
<dbReference type="GO" id="GO:0009507">
    <property type="term" value="C:chloroplast"/>
    <property type="evidence" value="ECO:0007669"/>
    <property type="project" value="UniProtKB-SubCell"/>
</dbReference>
<dbReference type="GO" id="GO:0015934">
    <property type="term" value="C:large ribosomal subunit"/>
    <property type="evidence" value="ECO:0007669"/>
    <property type="project" value="InterPro"/>
</dbReference>
<dbReference type="GO" id="GO:0019843">
    <property type="term" value="F:rRNA binding"/>
    <property type="evidence" value="ECO:0007669"/>
    <property type="project" value="UniProtKB-UniRule"/>
</dbReference>
<dbReference type="GO" id="GO:0003735">
    <property type="term" value="F:structural constituent of ribosome"/>
    <property type="evidence" value="ECO:0007669"/>
    <property type="project" value="InterPro"/>
</dbReference>
<dbReference type="GO" id="GO:0006412">
    <property type="term" value="P:translation"/>
    <property type="evidence" value="ECO:0007669"/>
    <property type="project" value="UniProtKB-UniRule"/>
</dbReference>
<dbReference type="CDD" id="cd00336">
    <property type="entry name" value="Ribosomal_L22"/>
    <property type="match status" value="1"/>
</dbReference>
<dbReference type="FunFam" id="3.90.470.10:FF:000006">
    <property type="entry name" value="50S ribosomal protein L22, chloroplastic"/>
    <property type="match status" value="1"/>
</dbReference>
<dbReference type="Gene3D" id="3.90.470.10">
    <property type="entry name" value="Ribosomal protein L22/L17"/>
    <property type="match status" value="1"/>
</dbReference>
<dbReference type="HAMAP" id="MF_01331_B">
    <property type="entry name" value="Ribosomal_uL22_B"/>
    <property type="match status" value="1"/>
</dbReference>
<dbReference type="InterPro" id="IPR001063">
    <property type="entry name" value="Ribosomal_uL22"/>
</dbReference>
<dbReference type="InterPro" id="IPR005727">
    <property type="entry name" value="Ribosomal_uL22_bac/chlpt-type"/>
</dbReference>
<dbReference type="InterPro" id="IPR047867">
    <property type="entry name" value="Ribosomal_uL22_bac/org-type"/>
</dbReference>
<dbReference type="InterPro" id="IPR018260">
    <property type="entry name" value="Ribosomal_uL22_CS"/>
</dbReference>
<dbReference type="InterPro" id="IPR036394">
    <property type="entry name" value="Ribosomal_uL22_sf"/>
</dbReference>
<dbReference type="NCBIfam" id="TIGR01044">
    <property type="entry name" value="rplV_bact"/>
    <property type="match status" value="1"/>
</dbReference>
<dbReference type="PANTHER" id="PTHR13501">
    <property type="entry name" value="CHLOROPLAST 50S RIBOSOMAL PROTEIN L22-RELATED"/>
    <property type="match status" value="1"/>
</dbReference>
<dbReference type="PANTHER" id="PTHR13501:SF10">
    <property type="entry name" value="LARGE RIBOSOMAL SUBUNIT PROTEIN UL22M"/>
    <property type="match status" value="1"/>
</dbReference>
<dbReference type="Pfam" id="PF00237">
    <property type="entry name" value="Ribosomal_L22"/>
    <property type="match status" value="1"/>
</dbReference>
<dbReference type="SUPFAM" id="SSF54843">
    <property type="entry name" value="Ribosomal protein L22"/>
    <property type="match status" value="1"/>
</dbReference>
<dbReference type="PROSITE" id="PS00464">
    <property type="entry name" value="RIBOSOMAL_L22"/>
    <property type="match status" value="1"/>
</dbReference>